<organism>
    <name type="scientific">Bartonella henselae (strain ATCC 49882 / DSM 28221 / CCUG 30454 / Houston 1)</name>
    <name type="common">Rochalimaea henselae</name>
    <dbReference type="NCBI Taxonomy" id="283166"/>
    <lineage>
        <taxon>Bacteria</taxon>
        <taxon>Pseudomonadati</taxon>
        <taxon>Pseudomonadota</taxon>
        <taxon>Alphaproteobacteria</taxon>
        <taxon>Hyphomicrobiales</taxon>
        <taxon>Bartonellaceae</taxon>
        <taxon>Bartonella</taxon>
    </lineage>
</organism>
<sequence>MGKTTQKGHRQKSFYRGVRAEKWAAWWLRCKGFHIAEIRFKTKCGEIDLIARRGNLVLIVEVKARSTLAEAMAAVSRVNERRIEAAADIWLARQKDRALLCVRFDLIAILPWRWPQHIPAFFMSNK</sequence>
<evidence type="ECO:0000255" key="1">
    <source>
        <dbReference type="HAMAP-Rule" id="MF_00048"/>
    </source>
</evidence>
<proteinExistence type="inferred from homology"/>
<gene>
    <name type="ordered locus">BH12350</name>
</gene>
<comment type="similarity">
    <text evidence="1">Belongs to the UPF0102 family.</text>
</comment>
<name>Y1235_BARHE</name>
<accession>Q6G2H1</accession>
<reference key="1">
    <citation type="journal article" date="2004" name="Proc. Natl. Acad. Sci. U.S.A.">
        <title>The louse-borne human pathogen Bartonella quintana is a genomic derivative of the zoonotic agent Bartonella henselae.</title>
        <authorList>
            <person name="Alsmark U.C.M."/>
            <person name="Frank A.C."/>
            <person name="Karlberg E.O."/>
            <person name="Legault B.-A."/>
            <person name="Ardell D.H."/>
            <person name="Canbaeck B."/>
            <person name="Eriksson A.-S."/>
            <person name="Naeslund A.K."/>
            <person name="Handley S.A."/>
            <person name="Huvet M."/>
            <person name="La Scola B."/>
            <person name="Holmberg M."/>
            <person name="Andersson S.G.E."/>
        </authorList>
    </citation>
    <scope>NUCLEOTIDE SEQUENCE [LARGE SCALE GENOMIC DNA]</scope>
    <source>
        <strain>ATCC 49882 / DSM 28221 / CCUG 30454 / Houston 1</strain>
    </source>
</reference>
<protein>
    <recommendedName>
        <fullName evidence="1">UPF0102 protein BH12350</fullName>
    </recommendedName>
</protein>
<dbReference type="EMBL" id="BX897699">
    <property type="protein sequence ID" value="CAF28017.1"/>
    <property type="molecule type" value="Genomic_DNA"/>
</dbReference>
<dbReference type="RefSeq" id="WP_011181066.1">
    <property type="nucleotide sequence ID" value="NZ_LRIJ02000001.1"/>
</dbReference>
<dbReference type="SMR" id="Q6G2H1"/>
<dbReference type="PaxDb" id="283166-BH12350"/>
<dbReference type="DNASU" id="2866116"/>
<dbReference type="EnsemblBacteria" id="CAF28017">
    <property type="protein sequence ID" value="CAF28017"/>
    <property type="gene ID" value="BH12350"/>
</dbReference>
<dbReference type="KEGG" id="bhe:BH12350"/>
<dbReference type="eggNOG" id="COG0792">
    <property type="taxonomic scope" value="Bacteria"/>
</dbReference>
<dbReference type="OrthoDB" id="9812968at2"/>
<dbReference type="Proteomes" id="UP000000421">
    <property type="component" value="Chromosome"/>
</dbReference>
<dbReference type="GO" id="GO:0003676">
    <property type="term" value="F:nucleic acid binding"/>
    <property type="evidence" value="ECO:0007669"/>
    <property type="project" value="InterPro"/>
</dbReference>
<dbReference type="Gene3D" id="3.40.1350.10">
    <property type="match status" value="1"/>
</dbReference>
<dbReference type="HAMAP" id="MF_00048">
    <property type="entry name" value="UPF0102"/>
    <property type="match status" value="1"/>
</dbReference>
<dbReference type="InterPro" id="IPR011335">
    <property type="entry name" value="Restrct_endonuc-II-like"/>
</dbReference>
<dbReference type="InterPro" id="IPR011856">
    <property type="entry name" value="tRNA_endonuc-like_dom_sf"/>
</dbReference>
<dbReference type="InterPro" id="IPR003509">
    <property type="entry name" value="UPF0102_YraN-like"/>
</dbReference>
<dbReference type="NCBIfam" id="NF009151">
    <property type="entry name" value="PRK12497.1-5"/>
    <property type="match status" value="1"/>
</dbReference>
<dbReference type="PANTHER" id="PTHR34039">
    <property type="entry name" value="UPF0102 PROTEIN YRAN"/>
    <property type="match status" value="1"/>
</dbReference>
<dbReference type="PANTHER" id="PTHR34039:SF1">
    <property type="entry name" value="UPF0102 PROTEIN YRAN"/>
    <property type="match status" value="1"/>
</dbReference>
<dbReference type="Pfam" id="PF02021">
    <property type="entry name" value="UPF0102"/>
    <property type="match status" value="1"/>
</dbReference>
<dbReference type="SUPFAM" id="SSF52980">
    <property type="entry name" value="Restriction endonuclease-like"/>
    <property type="match status" value="1"/>
</dbReference>
<feature type="chain" id="PRO_0000336127" description="UPF0102 protein BH12350">
    <location>
        <begin position="1"/>
        <end position="126"/>
    </location>
</feature>